<reference key="1">
    <citation type="journal article" date="2010" name="Science">
        <title>The genome of the Western clawed frog Xenopus tropicalis.</title>
        <authorList>
            <person name="Hellsten U."/>
            <person name="Harland R.M."/>
            <person name="Gilchrist M.J."/>
            <person name="Hendrix D."/>
            <person name="Jurka J."/>
            <person name="Kapitonov V."/>
            <person name="Ovcharenko I."/>
            <person name="Putnam N.H."/>
            <person name="Shu S."/>
            <person name="Taher L."/>
            <person name="Blitz I.L."/>
            <person name="Blumberg B."/>
            <person name="Dichmann D.S."/>
            <person name="Dubchak I."/>
            <person name="Amaya E."/>
            <person name="Detter J.C."/>
            <person name="Fletcher R."/>
            <person name="Gerhard D.S."/>
            <person name="Goodstein D."/>
            <person name="Graves T."/>
            <person name="Grigoriev I.V."/>
            <person name="Grimwood J."/>
            <person name="Kawashima T."/>
            <person name="Lindquist E."/>
            <person name="Lucas S.M."/>
            <person name="Mead P.E."/>
            <person name="Mitros T."/>
            <person name="Ogino H."/>
            <person name="Ohta Y."/>
            <person name="Poliakov A.V."/>
            <person name="Pollet N."/>
            <person name="Robert J."/>
            <person name="Salamov A."/>
            <person name="Sater A.K."/>
            <person name="Schmutz J."/>
            <person name="Terry A."/>
            <person name="Vize P.D."/>
            <person name="Warren W.C."/>
            <person name="Wells D."/>
            <person name="Wills A."/>
            <person name="Wilson R.K."/>
            <person name="Zimmerman L.B."/>
            <person name="Zorn A.M."/>
            <person name="Grainger R."/>
            <person name="Grammer T."/>
            <person name="Khokha M.K."/>
            <person name="Richardson P.M."/>
            <person name="Rokhsar D.S."/>
        </authorList>
    </citation>
    <scope>NUCLEOTIDE SEQUENCE [LARGE SCALE GENOMIC DNA]</scope>
</reference>
<comment type="function">
    <text evidence="1 2">Catalyzes the epimerization of the S- and R-forms of NAD(P)HX, a damaged form of NAD(P)H that is a result of enzymatic or heat-dependent hydration. This is a prerequisite for the S-specific NAD(P)H-hydrate dehydratase to allow the repair of both epimers of NAD(P)HX.</text>
</comment>
<comment type="catalytic activity">
    <reaction evidence="1">
        <text>(6R)-NADHX = (6S)-NADHX</text>
        <dbReference type="Rhea" id="RHEA:32215"/>
        <dbReference type="ChEBI" id="CHEBI:64074"/>
        <dbReference type="ChEBI" id="CHEBI:64075"/>
        <dbReference type="EC" id="5.1.99.6"/>
    </reaction>
</comment>
<comment type="catalytic activity">
    <reaction evidence="1">
        <text>(6R)-NADPHX = (6S)-NADPHX</text>
        <dbReference type="Rhea" id="RHEA:32227"/>
        <dbReference type="ChEBI" id="CHEBI:64076"/>
        <dbReference type="ChEBI" id="CHEBI:64077"/>
        <dbReference type="EC" id="5.1.99.6"/>
    </reaction>
</comment>
<comment type="cofactor">
    <cofactor evidence="2">
        <name>K(+)</name>
        <dbReference type="ChEBI" id="CHEBI:29103"/>
    </cofactor>
    <text evidence="2">Binds 1 potassium ion per subunit.</text>
</comment>
<comment type="subcellular location">
    <subcellularLocation>
        <location evidence="2">Mitochondrion</location>
    </subcellularLocation>
    <subcellularLocation>
        <location evidence="2">Secreted</location>
    </subcellularLocation>
</comment>
<comment type="similarity">
    <text evidence="2">Belongs to the NnrE/AIBP family.</text>
</comment>
<proteinExistence type="inferred from homology"/>
<gene>
    <name evidence="1" type="primary">naxe</name>
    <name type="synonym">apoa1bp</name>
</gene>
<accession>F7DL67</accession>
<name>NNRE_XENTR</name>
<feature type="transit peptide" description="Mitochondrion" evidence="2">
    <location>
        <begin position="1"/>
        <end position="52"/>
    </location>
</feature>
<feature type="chain" id="PRO_0000416311" description="NAD(P)H-hydrate epimerase">
    <location>
        <begin position="53"/>
        <end position="292"/>
    </location>
</feature>
<feature type="domain" description="YjeF N-terminal" evidence="2">
    <location>
        <begin position="68"/>
        <end position="279"/>
    </location>
</feature>
<feature type="binding site" evidence="2">
    <location>
        <begin position="122"/>
        <end position="126"/>
    </location>
    <ligand>
        <name>(6S)-NADPHX</name>
        <dbReference type="ChEBI" id="CHEBI:64076"/>
    </ligand>
</feature>
<feature type="binding site" evidence="2">
    <location>
        <position position="123"/>
    </location>
    <ligand>
        <name>K(+)</name>
        <dbReference type="ChEBI" id="CHEBI:29103"/>
    </ligand>
</feature>
<feature type="binding site" evidence="2">
    <location>
        <position position="189"/>
    </location>
    <ligand>
        <name>K(+)</name>
        <dbReference type="ChEBI" id="CHEBI:29103"/>
    </ligand>
</feature>
<feature type="binding site" evidence="2">
    <location>
        <begin position="193"/>
        <end position="199"/>
    </location>
    <ligand>
        <name>(6S)-NADPHX</name>
        <dbReference type="ChEBI" id="CHEBI:64076"/>
    </ligand>
</feature>
<feature type="binding site" evidence="2">
    <location>
        <position position="222"/>
    </location>
    <ligand>
        <name>(6S)-NADPHX</name>
        <dbReference type="ChEBI" id="CHEBI:64076"/>
    </ligand>
</feature>
<feature type="binding site" evidence="2">
    <location>
        <position position="225"/>
    </location>
    <ligand>
        <name>K(+)</name>
        <dbReference type="ChEBI" id="CHEBI:29103"/>
    </ligand>
</feature>
<keyword id="KW-0413">Isomerase</keyword>
<keyword id="KW-0479">Metal-binding</keyword>
<keyword id="KW-0496">Mitochondrion</keyword>
<keyword id="KW-0520">NAD</keyword>
<keyword id="KW-0521">NADP</keyword>
<keyword id="KW-0547">Nucleotide-binding</keyword>
<keyword id="KW-0630">Potassium</keyword>
<keyword id="KW-1185">Reference proteome</keyword>
<keyword id="KW-0964">Secreted</keyword>
<keyword id="KW-0809">Transit peptide</keyword>
<sequence length="292" mass="31594">MYGLRTLFSLGLLVGGARLGARVAQVGALGGTCPLGQGLVADGNSQCKQFRTGAAMERGLRYLSQEEAQAVDEELFNEYRFSVDQLMELAGLSCAVAITKAYPVSSFTSNLPTVLVVCGPGNNGGDGLVCARHLKLFKGYEPAIHYPKRPNKTLFENLTTQCQKMDIPFVSEFPSEPEVIDGAYNLVVDAVFGFSFKGAVREPFGNILSTLKRVTVPIASVDIPSGWDVEKGNPEGIQPDMLISLTAPKQSAVHFTGRYHFLGGRFVPKALEKKYSLNLPPYPGTECVQKLP</sequence>
<organism>
    <name type="scientific">Xenopus tropicalis</name>
    <name type="common">Western clawed frog</name>
    <name type="synonym">Silurana tropicalis</name>
    <dbReference type="NCBI Taxonomy" id="8364"/>
    <lineage>
        <taxon>Eukaryota</taxon>
        <taxon>Metazoa</taxon>
        <taxon>Chordata</taxon>
        <taxon>Craniata</taxon>
        <taxon>Vertebrata</taxon>
        <taxon>Euteleostomi</taxon>
        <taxon>Amphibia</taxon>
        <taxon>Batrachia</taxon>
        <taxon>Anura</taxon>
        <taxon>Pipoidea</taxon>
        <taxon>Pipidae</taxon>
        <taxon>Xenopodinae</taxon>
        <taxon>Xenopus</taxon>
        <taxon>Silurana</taxon>
    </lineage>
</organism>
<evidence type="ECO:0000250" key="1">
    <source>
        <dbReference type="UniProtKB" id="Q8NCW5"/>
    </source>
</evidence>
<evidence type="ECO:0000255" key="2">
    <source>
        <dbReference type="HAMAP-Rule" id="MF_03159"/>
    </source>
</evidence>
<dbReference type="EC" id="5.1.99.6" evidence="1"/>
<dbReference type="EMBL" id="AAMC01086668">
    <property type="status" value="NOT_ANNOTATED_CDS"/>
    <property type="molecule type" value="Genomic_DNA"/>
</dbReference>
<dbReference type="SMR" id="F7DL67"/>
<dbReference type="FunCoup" id="F7DL67">
    <property type="interactions" value="925"/>
</dbReference>
<dbReference type="STRING" id="8364.ENSXETP00000042177"/>
<dbReference type="PaxDb" id="8364-ENSXETP00000044001"/>
<dbReference type="eggNOG" id="KOG2585">
    <property type="taxonomic scope" value="Eukaryota"/>
</dbReference>
<dbReference type="HOGENOM" id="CLU_024853_3_0_1"/>
<dbReference type="InParanoid" id="F7DL67"/>
<dbReference type="TreeFam" id="TF300197"/>
<dbReference type="Proteomes" id="UP000008143">
    <property type="component" value="Unplaced"/>
</dbReference>
<dbReference type="GO" id="GO:0005576">
    <property type="term" value="C:extracellular region"/>
    <property type="evidence" value="ECO:0007669"/>
    <property type="project" value="UniProtKB-SubCell"/>
</dbReference>
<dbReference type="GO" id="GO:0005739">
    <property type="term" value="C:mitochondrion"/>
    <property type="evidence" value="ECO:0007669"/>
    <property type="project" value="UniProtKB-SubCell"/>
</dbReference>
<dbReference type="GO" id="GO:0046872">
    <property type="term" value="F:metal ion binding"/>
    <property type="evidence" value="ECO:0007669"/>
    <property type="project" value="UniProtKB-KW"/>
</dbReference>
<dbReference type="GO" id="GO:0052856">
    <property type="term" value="F:NAD(P)HX epimerase activity"/>
    <property type="evidence" value="ECO:0007669"/>
    <property type="project" value="UniProtKB-UniRule"/>
</dbReference>
<dbReference type="GO" id="GO:0000166">
    <property type="term" value="F:nucleotide binding"/>
    <property type="evidence" value="ECO:0007669"/>
    <property type="project" value="UniProtKB-KW"/>
</dbReference>
<dbReference type="FunFam" id="3.40.50.10260:FF:000002">
    <property type="entry name" value="NAD(P)H-hydrate epimerase"/>
    <property type="match status" value="1"/>
</dbReference>
<dbReference type="Gene3D" id="3.40.50.10260">
    <property type="entry name" value="YjeF N-terminal domain"/>
    <property type="match status" value="1"/>
</dbReference>
<dbReference type="HAMAP" id="MF_01966">
    <property type="entry name" value="NADHX_epimerase"/>
    <property type="match status" value="1"/>
</dbReference>
<dbReference type="InterPro" id="IPR004443">
    <property type="entry name" value="YjeF_N_dom"/>
</dbReference>
<dbReference type="InterPro" id="IPR036652">
    <property type="entry name" value="YjeF_N_dom_sf"/>
</dbReference>
<dbReference type="InterPro" id="IPR032976">
    <property type="entry name" value="YJEFN_prot_NAXE-like"/>
</dbReference>
<dbReference type="NCBIfam" id="TIGR00197">
    <property type="entry name" value="yjeF_nterm"/>
    <property type="match status" value="1"/>
</dbReference>
<dbReference type="PANTHER" id="PTHR13232">
    <property type="entry name" value="NAD(P)H-HYDRATE EPIMERASE"/>
    <property type="match status" value="1"/>
</dbReference>
<dbReference type="PANTHER" id="PTHR13232:SF11">
    <property type="entry name" value="NAD(P)H-HYDRATE EPIMERASE"/>
    <property type="match status" value="1"/>
</dbReference>
<dbReference type="Pfam" id="PF03853">
    <property type="entry name" value="YjeF_N"/>
    <property type="match status" value="1"/>
</dbReference>
<dbReference type="SUPFAM" id="SSF64153">
    <property type="entry name" value="YjeF N-terminal domain-like"/>
    <property type="match status" value="1"/>
</dbReference>
<dbReference type="PROSITE" id="PS51385">
    <property type="entry name" value="YJEF_N"/>
    <property type="match status" value="1"/>
</dbReference>
<protein>
    <recommendedName>
        <fullName evidence="2">NAD(P)H-hydrate epimerase</fullName>
        <ecNumber evidence="1">5.1.99.6</ecNumber>
    </recommendedName>
    <alternativeName>
        <fullName>Apolipoprotein A-I binding protein</fullName>
    </alternativeName>
    <alternativeName>
        <fullName evidence="1">NAD(P)HX epimerase</fullName>
    </alternativeName>
</protein>